<organism>
    <name type="scientific">Triticum aestivum</name>
    <name type="common">Wheat</name>
    <dbReference type="NCBI Taxonomy" id="4565"/>
    <lineage>
        <taxon>Eukaryota</taxon>
        <taxon>Viridiplantae</taxon>
        <taxon>Streptophyta</taxon>
        <taxon>Embryophyta</taxon>
        <taxon>Tracheophyta</taxon>
        <taxon>Spermatophyta</taxon>
        <taxon>Magnoliopsida</taxon>
        <taxon>Liliopsida</taxon>
        <taxon>Poales</taxon>
        <taxon>Poaceae</taxon>
        <taxon>BOP clade</taxon>
        <taxon>Pooideae</taxon>
        <taxon>Triticodae</taxon>
        <taxon>Triticeae</taxon>
        <taxon>Triticinae</taxon>
        <taxon>Triticum</taxon>
    </lineage>
</organism>
<dbReference type="EMBL" id="D37942">
    <property type="protein sequence ID" value="BAA07156.1"/>
    <property type="molecule type" value="mRNA"/>
</dbReference>
<dbReference type="PIR" id="S56684">
    <property type="entry name" value="S56684"/>
</dbReference>
<dbReference type="RefSeq" id="NP_001414872.1">
    <property type="nucleotide sequence ID" value="NM_001427943.1"/>
</dbReference>
<dbReference type="RefSeq" id="XP_044350835.1">
    <property type="nucleotide sequence ID" value="XM_044494900.1"/>
</dbReference>
<dbReference type="RefSeq" id="XP_044358426.1">
    <property type="nucleotide sequence ID" value="XM_044502491.1"/>
</dbReference>
<dbReference type="RefSeq" id="XP_044358427.1">
    <property type="nucleotide sequence ID" value="XM_044502492.1"/>
</dbReference>
<dbReference type="SMR" id="Q43216"/>
<dbReference type="STRING" id="4565.Q43216"/>
<dbReference type="PaxDb" id="4565-Traes_3B_5EE8348ED1.8"/>
<dbReference type="EnsemblPlants" id="TraesARI3A03G01482970.1">
    <property type="protein sequence ID" value="TraesARI3A03G01482970.1.CDS1"/>
    <property type="gene ID" value="TraesARI3A03G01482970"/>
</dbReference>
<dbReference type="EnsemblPlants" id="TraesARI3B03G01735670.1">
    <property type="protein sequence ID" value="TraesARI3B03G01735670.1.CDS1"/>
    <property type="gene ID" value="TraesARI3B03G01735670"/>
</dbReference>
<dbReference type="EnsemblPlants" id="TraesARI3D03G01969810.1">
    <property type="protein sequence ID" value="TraesARI3D03G01969810.1.CDS1"/>
    <property type="gene ID" value="TraesARI3D03G01969810"/>
</dbReference>
<dbReference type="EnsemblPlants" id="TraesARI3D03G01969910.1">
    <property type="protein sequence ID" value="TraesARI3D03G01969910.1.CDS1"/>
    <property type="gene ID" value="TraesARI3D03G01969910"/>
</dbReference>
<dbReference type="EnsemblPlants" id="TraesCAD_scaffold_030958_01G000100.1">
    <property type="protein sequence ID" value="TraesCAD_scaffold_030958_01G000100.1"/>
    <property type="gene ID" value="TraesCAD_scaffold_030958_01G000100"/>
</dbReference>
<dbReference type="EnsemblPlants" id="TraesCAD_scaffold_040311_01G000100.1">
    <property type="protein sequence ID" value="TraesCAD_scaffold_040311_01G000100.1"/>
    <property type="gene ID" value="TraesCAD_scaffold_040311_01G000100"/>
</dbReference>
<dbReference type="EnsemblPlants" id="TraesCAD_scaffold_067954_01G000100.1">
    <property type="protein sequence ID" value="TraesCAD_scaffold_067954_01G000100.1"/>
    <property type="gene ID" value="TraesCAD_scaffold_067954_01G000100"/>
</dbReference>
<dbReference type="EnsemblPlants" id="TraesCAD_scaffold_104655_01G000100.1">
    <property type="protein sequence ID" value="TraesCAD_scaffold_104655_01G000100.1"/>
    <property type="gene ID" value="TraesCAD_scaffold_104655_01G000100"/>
</dbReference>
<dbReference type="EnsemblPlants" id="TraesCLE_scaffold_003176_01G000100.1">
    <property type="protein sequence ID" value="TraesCLE_scaffold_003176_01G000100.1"/>
    <property type="gene ID" value="TraesCLE_scaffold_003176_01G000100"/>
</dbReference>
<dbReference type="EnsemblPlants" id="TraesCLE_scaffold_018095_01G000100.1">
    <property type="protein sequence ID" value="TraesCLE_scaffold_018095_01G000100.1"/>
    <property type="gene ID" value="TraesCLE_scaffold_018095_01G000100"/>
</dbReference>
<dbReference type="EnsemblPlants" id="TraesCLE_scaffold_093747_01G000100.1">
    <property type="protein sequence ID" value="TraesCLE_scaffold_093747_01G000100.1"/>
    <property type="gene ID" value="TraesCLE_scaffold_093747_01G000100"/>
</dbReference>
<dbReference type="EnsemblPlants" id="TraesCLE_scaffold_195747_01G000100.1">
    <property type="protein sequence ID" value="TraesCLE_scaffold_195747_01G000100.1"/>
    <property type="gene ID" value="TraesCLE_scaffold_195747_01G000100"/>
</dbReference>
<dbReference type="EnsemblPlants" id="TraesCS3A02G357500.1">
    <property type="protein sequence ID" value="TraesCS3A02G357500.1.cds1"/>
    <property type="gene ID" value="TraesCS3A02G357500"/>
</dbReference>
<dbReference type="EnsemblPlants" id="TraesCS3A03G0850200.1">
    <property type="protein sequence ID" value="TraesCS3A03G0850200.1.CDS1"/>
    <property type="gene ID" value="TraesCS3A03G0850200"/>
</dbReference>
<dbReference type="EnsemblPlants" id="TraesCS3B02G390200.1">
    <property type="protein sequence ID" value="TraesCS3B02G390200.1.cds1"/>
    <property type="gene ID" value="TraesCS3B02G390200"/>
</dbReference>
<dbReference type="EnsemblPlants" id="TraesCS3B03G0974400.1">
    <property type="protein sequence ID" value="TraesCS3B03G0974400.1.CDS1"/>
    <property type="gene ID" value="TraesCS3B03G0974400"/>
</dbReference>
<dbReference type="EnsemblPlants" id="TraesCS3D02G351300.1">
    <property type="protein sequence ID" value="TraesCS3D02G351300.1.cds1"/>
    <property type="gene ID" value="TraesCS3D02G351300"/>
</dbReference>
<dbReference type="EnsemblPlants" id="TraesCS3D02G351400.1">
    <property type="protein sequence ID" value="TraesCS3D02G351400.1.cds1"/>
    <property type="gene ID" value="TraesCS3D02G351400"/>
</dbReference>
<dbReference type="EnsemblPlants" id="TraesCS3D03G0778500.1">
    <property type="protein sequence ID" value="TraesCS3D03G0778500.1.CDS1"/>
    <property type="gene ID" value="TraesCS3D03G0778500"/>
</dbReference>
<dbReference type="EnsemblPlants" id="TraesCS3D03G0779100.1">
    <property type="protein sequence ID" value="TraesCS3D03G0779100.1.CDS1"/>
    <property type="gene ID" value="TraesCS3D03G0779100"/>
</dbReference>
<dbReference type="EnsemblPlants" id="TraesJAG3A03G01470230.1">
    <property type="protein sequence ID" value="TraesJAG3A03G01470230.1.CDS1"/>
    <property type="gene ID" value="TraesJAG3A03G01470230"/>
</dbReference>
<dbReference type="EnsemblPlants" id="TraesJAG3B03G01715200.1">
    <property type="protein sequence ID" value="TraesJAG3B03G01715200.1.CDS1"/>
    <property type="gene ID" value="TraesJAG3B03G01715200"/>
</dbReference>
<dbReference type="EnsemblPlants" id="TraesJAG3D03G01944160.1">
    <property type="protein sequence ID" value="TraesJAG3D03G01944160.1.CDS1"/>
    <property type="gene ID" value="TraesJAG3D03G01944160"/>
</dbReference>
<dbReference type="EnsemblPlants" id="TraesJUL3A03G01473930.1">
    <property type="protein sequence ID" value="TraesJUL3A03G01473930.1.CDS1"/>
    <property type="gene ID" value="TraesJUL3A03G01473930"/>
</dbReference>
<dbReference type="EnsemblPlants" id="TraesJUL3B03G01721080.1">
    <property type="protein sequence ID" value="TraesJUL3B03G01721080.1.CDS1"/>
    <property type="gene ID" value="TraesJUL3B03G01721080"/>
</dbReference>
<dbReference type="EnsemblPlants" id="TraesJUL3D03G01954010.1">
    <property type="protein sequence ID" value="TraesJUL3D03G01954010.1.CDS1"/>
    <property type="gene ID" value="TraesJUL3D03G01954010"/>
</dbReference>
<dbReference type="EnsemblPlants" id="TraesJUL3D03G01954100.1">
    <property type="protein sequence ID" value="TraesJUL3D03G01954100.1.CDS1"/>
    <property type="gene ID" value="TraesJUL3D03G01954100"/>
</dbReference>
<dbReference type="EnsemblPlants" id="TraesKAR3A01G0371320.1">
    <property type="protein sequence ID" value="cds.TraesKAR3A01G0371320.1"/>
    <property type="gene ID" value="TraesKAR3A01G0371320"/>
</dbReference>
<dbReference type="EnsemblPlants" id="TraesKAR3B01G0408190.1">
    <property type="protein sequence ID" value="cds.TraesKAR3B01G0408190.1"/>
    <property type="gene ID" value="TraesKAR3B01G0408190"/>
</dbReference>
<dbReference type="EnsemblPlants" id="TraesKAR3D01G0335600.1">
    <property type="protein sequence ID" value="cds.TraesKAR3D01G0335600.1"/>
    <property type="gene ID" value="TraesKAR3D01G0335600"/>
</dbReference>
<dbReference type="EnsemblPlants" id="TraesKAR3D01G0335730.1">
    <property type="protein sequence ID" value="cds.TraesKAR3D01G0335730.1"/>
    <property type="gene ID" value="TraesKAR3D01G0335730"/>
</dbReference>
<dbReference type="EnsemblPlants" id="TraesLAC3A03G01405390.1">
    <property type="protein sequence ID" value="TraesLAC3A03G01405390.1.CDS1"/>
    <property type="gene ID" value="TraesLAC3A03G01405390"/>
</dbReference>
<dbReference type="EnsemblPlants" id="TraesLAC3B03G01648760.1">
    <property type="protein sequence ID" value="TraesLAC3B03G01648760.1.CDS1"/>
    <property type="gene ID" value="TraesLAC3B03G01648760"/>
</dbReference>
<dbReference type="EnsemblPlants" id="TraesLAC3D03G01877820.1">
    <property type="protein sequence ID" value="TraesLAC3D03G01877820.1.CDS1"/>
    <property type="gene ID" value="TraesLAC3D03G01877820"/>
</dbReference>
<dbReference type="EnsemblPlants" id="TraesLAC3D03G01877910.1">
    <property type="protein sequence ID" value="TraesLAC3D03G01877910.1.CDS1"/>
    <property type="gene ID" value="TraesLAC3D03G01877910"/>
</dbReference>
<dbReference type="EnsemblPlants" id="TraesLDM3A03G01462100.1">
    <property type="protein sequence ID" value="TraesLDM3A03G01462100.1.CDS1"/>
    <property type="gene ID" value="TraesLDM3A03G01462100"/>
</dbReference>
<dbReference type="EnsemblPlants" id="TraesLDM3B03G01705710.1">
    <property type="protein sequence ID" value="TraesLDM3B03G01705710.1.CDS1"/>
    <property type="gene ID" value="TraesLDM3B03G01705710"/>
</dbReference>
<dbReference type="EnsemblPlants" id="TraesLDM3D03G01942740.1">
    <property type="protein sequence ID" value="TraesLDM3D03G01942740.1.CDS1"/>
    <property type="gene ID" value="TraesLDM3D03G01942740"/>
</dbReference>
<dbReference type="EnsemblPlants" id="TraesLDM3D03G01942840.1">
    <property type="protein sequence ID" value="TraesLDM3D03G01942840.1.CDS1"/>
    <property type="gene ID" value="TraesLDM3D03G01942840"/>
</dbReference>
<dbReference type="EnsemblPlants" id="TraesMAC3B03G01707980.1">
    <property type="protein sequence ID" value="TraesMAC3B03G01707980.1.CDS1"/>
    <property type="gene ID" value="TraesMAC3B03G01707980"/>
</dbReference>
<dbReference type="EnsemblPlants" id="TraesMAC3D03G01934860.1">
    <property type="protein sequence ID" value="TraesMAC3D03G01934860.1.CDS1"/>
    <property type="gene ID" value="TraesMAC3D03G01934860"/>
</dbReference>
<dbReference type="EnsemblPlants" id="TraesMAC3D03G01934960.1">
    <property type="protein sequence ID" value="TraesMAC3D03G01934960.1.CDS1"/>
    <property type="gene ID" value="TraesMAC3D03G01934960"/>
</dbReference>
<dbReference type="EnsemblPlants" id="TraesNOR3A03G01482280.1">
    <property type="protein sequence ID" value="TraesNOR3A03G01482280.1.CDS1"/>
    <property type="gene ID" value="TraesNOR3A03G01482280"/>
</dbReference>
<dbReference type="EnsemblPlants" id="TraesNOR3D03G01962560.1">
    <property type="protein sequence ID" value="TraesNOR3D03G01962560.1.CDS1"/>
    <property type="gene ID" value="TraesNOR3D03G01962560"/>
</dbReference>
<dbReference type="EnsemblPlants" id="TraesNOR3D03G01962660.1">
    <property type="protein sequence ID" value="TraesNOR3D03G01962660.1.CDS1"/>
    <property type="gene ID" value="TraesNOR3D03G01962660"/>
</dbReference>
<dbReference type="EnsemblPlants" id="TraesPARA_EIv1.0_0852200.1">
    <property type="protein sequence ID" value="TraesPARA_EIv1.0_0852200.1.CDS1"/>
    <property type="gene ID" value="TraesPARA_EIv1.0_0852200"/>
</dbReference>
<dbReference type="EnsemblPlants" id="TraesPARA_EIv1.0_0952570.1">
    <property type="protein sequence ID" value="TraesPARA_EIv1.0_0952570.1.CDS1"/>
    <property type="gene ID" value="TraesPARA_EIv1.0_0952570"/>
</dbReference>
<dbReference type="EnsemblPlants" id="TraesPARA_EIv1.0_1135650.1">
    <property type="protein sequence ID" value="TraesPARA_EIv1.0_1135650.1.CDS1"/>
    <property type="gene ID" value="TraesPARA_EIv1.0_1135650"/>
</dbReference>
<dbReference type="EnsemblPlants" id="TraesPARA_EIv1.0_1135680.1">
    <property type="protein sequence ID" value="TraesPARA_EIv1.0_1135680.1.CDS1"/>
    <property type="gene ID" value="TraesPARA_EIv1.0_1135680"/>
</dbReference>
<dbReference type="EnsemblPlants" id="TraesRN3B0100975500.1">
    <property type="protein sequence ID" value="TraesRN3B0100975500.1"/>
    <property type="gene ID" value="TraesRN3B0100975500"/>
</dbReference>
<dbReference type="EnsemblPlants" id="TraesRN3D0100812500.1">
    <property type="protein sequence ID" value="TraesRN3D0100812500.1"/>
    <property type="gene ID" value="TraesRN3D0100812500"/>
</dbReference>
<dbReference type="EnsemblPlants" id="TraesRN3D0100813100.1">
    <property type="protein sequence ID" value="TraesRN3D0100813100.1"/>
    <property type="gene ID" value="TraesRN3D0100813100"/>
</dbReference>
<dbReference type="EnsemblPlants" id="TraesROB_scaffold_009430_01G000100.1">
    <property type="protein sequence ID" value="TraesROB_scaffold_009430_01G000100.1"/>
    <property type="gene ID" value="TraesROB_scaffold_009430_01G000100"/>
</dbReference>
<dbReference type="EnsemblPlants" id="TraesROB_scaffold_039272_01G000100.1">
    <property type="protein sequence ID" value="TraesROB_scaffold_039272_01G000100.1"/>
    <property type="gene ID" value="TraesROB_scaffold_039272_01G000100"/>
</dbReference>
<dbReference type="EnsemblPlants" id="TraesROB_scaffold_072729_01G000100.1">
    <property type="protein sequence ID" value="TraesROB_scaffold_072729_01G000100.1"/>
    <property type="gene ID" value="TraesROB_scaffold_072729_01G000100"/>
</dbReference>
<dbReference type="EnsemblPlants" id="TraesSTA3A03G01453030.1">
    <property type="protein sequence ID" value="TraesSTA3A03G01453030.1.CDS1"/>
    <property type="gene ID" value="TraesSTA3A03G01453030"/>
</dbReference>
<dbReference type="EnsemblPlants" id="TraesSTA3B03G01696450.1">
    <property type="protein sequence ID" value="TraesSTA3B03G01696450.1.CDS1"/>
    <property type="gene ID" value="TraesSTA3B03G01696450"/>
</dbReference>
<dbReference type="EnsemblPlants" id="TraesSTA3D03G01939450.1">
    <property type="protein sequence ID" value="TraesSTA3D03G01939450.1.CDS1"/>
    <property type="gene ID" value="TraesSTA3D03G01939450"/>
</dbReference>
<dbReference type="EnsemblPlants" id="TraesSTA3D03G01939560.1">
    <property type="protein sequence ID" value="TraesSTA3D03G01939560.1.CDS1"/>
    <property type="gene ID" value="TraesSTA3D03G01939560"/>
</dbReference>
<dbReference type="EnsemblPlants" id="TraesSYM3B03G01728800.1">
    <property type="protein sequence ID" value="TraesSYM3B03G01728800.1.CDS1"/>
    <property type="gene ID" value="TraesSYM3B03G01728800"/>
</dbReference>
<dbReference type="EnsemblPlants" id="TraesSYM3D03G01960180.1">
    <property type="protein sequence ID" value="TraesSYM3D03G01960180.1.CDS1"/>
    <property type="gene ID" value="TraesSYM3D03G01960180"/>
</dbReference>
<dbReference type="EnsemblPlants" id="TraesSYM3D03G01960280.1">
    <property type="protein sequence ID" value="TraesSYM3D03G01960280.1.CDS1"/>
    <property type="gene ID" value="TraesSYM3D03G01960280"/>
</dbReference>
<dbReference type="EnsemblPlants" id="TraesWEE_scaffold_084326_01G000100.1">
    <property type="protein sequence ID" value="TraesWEE_scaffold_084326_01G000100.1"/>
    <property type="gene ID" value="TraesWEE_scaffold_084326_01G000100"/>
</dbReference>
<dbReference type="EnsemblPlants" id="TraesWEE_scaffold_104702_01G000100.1">
    <property type="protein sequence ID" value="TraesWEE_scaffold_104702_01G000100.1"/>
    <property type="gene ID" value="TraesWEE_scaffold_104702_01G000100"/>
</dbReference>
<dbReference type="EnsemblPlants" id="TraesWEE_scaffold_128839_01G000100.1">
    <property type="protein sequence ID" value="TraesWEE_scaffold_128839_01G000100.1"/>
    <property type="gene ID" value="TraesWEE_scaffold_128839_01G000100"/>
</dbReference>
<dbReference type="GeneID" id="123071360"/>
<dbReference type="GeneID" id="123079691"/>
<dbReference type="GeneID" id="123079692"/>
<dbReference type="GeneID" id="543183"/>
<dbReference type="Gramene" id="TraesARI3A03G01482970.1">
    <property type="protein sequence ID" value="TraesARI3A03G01482970.1.CDS1"/>
    <property type="gene ID" value="TraesARI3A03G01482970"/>
</dbReference>
<dbReference type="Gramene" id="TraesARI3B03G01735670.1">
    <property type="protein sequence ID" value="TraesARI3B03G01735670.1.CDS1"/>
    <property type="gene ID" value="TraesARI3B03G01735670"/>
</dbReference>
<dbReference type="Gramene" id="TraesARI3D03G01969810.1">
    <property type="protein sequence ID" value="TraesARI3D03G01969810.1.CDS1"/>
    <property type="gene ID" value="TraesARI3D03G01969810"/>
</dbReference>
<dbReference type="Gramene" id="TraesARI3D03G01969910.1">
    <property type="protein sequence ID" value="TraesARI3D03G01969910.1.CDS1"/>
    <property type="gene ID" value="TraesARI3D03G01969910"/>
</dbReference>
<dbReference type="Gramene" id="TraesCAD_scaffold_030958_01G000100.1">
    <property type="protein sequence ID" value="TraesCAD_scaffold_030958_01G000100.1"/>
    <property type="gene ID" value="TraesCAD_scaffold_030958_01G000100"/>
</dbReference>
<dbReference type="Gramene" id="TraesCAD_scaffold_040311_01G000100.1">
    <property type="protein sequence ID" value="TraesCAD_scaffold_040311_01G000100.1"/>
    <property type="gene ID" value="TraesCAD_scaffold_040311_01G000100"/>
</dbReference>
<dbReference type="Gramene" id="TraesCAD_scaffold_067954_01G000100.1">
    <property type="protein sequence ID" value="TraesCAD_scaffold_067954_01G000100.1"/>
    <property type="gene ID" value="TraesCAD_scaffold_067954_01G000100"/>
</dbReference>
<dbReference type="Gramene" id="TraesCAD_scaffold_104655_01G000100.1">
    <property type="protein sequence ID" value="TraesCAD_scaffold_104655_01G000100.1"/>
    <property type="gene ID" value="TraesCAD_scaffold_104655_01G000100"/>
</dbReference>
<dbReference type="Gramene" id="TraesCLE_scaffold_003176_01G000100.1">
    <property type="protein sequence ID" value="TraesCLE_scaffold_003176_01G000100.1"/>
    <property type="gene ID" value="TraesCLE_scaffold_003176_01G000100"/>
</dbReference>
<dbReference type="Gramene" id="TraesCLE_scaffold_018095_01G000100.1">
    <property type="protein sequence ID" value="TraesCLE_scaffold_018095_01G000100.1"/>
    <property type="gene ID" value="TraesCLE_scaffold_018095_01G000100"/>
</dbReference>
<dbReference type="Gramene" id="TraesCLE_scaffold_093747_01G000100.1">
    <property type="protein sequence ID" value="TraesCLE_scaffold_093747_01G000100.1"/>
    <property type="gene ID" value="TraesCLE_scaffold_093747_01G000100"/>
</dbReference>
<dbReference type="Gramene" id="TraesCLE_scaffold_195747_01G000100.1">
    <property type="protein sequence ID" value="TraesCLE_scaffold_195747_01G000100.1"/>
    <property type="gene ID" value="TraesCLE_scaffold_195747_01G000100"/>
</dbReference>
<dbReference type="Gramene" id="TraesCS3A02G357500.1">
    <property type="protein sequence ID" value="TraesCS3A02G357500.1.cds1"/>
    <property type="gene ID" value="TraesCS3A02G357500"/>
</dbReference>
<dbReference type="Gramene" id="TraesCS3A03G0850200.1">
    <property type="protein sequence ID" value="TraesCS3A03G0850200.1.CDS1"/>
    <property type="gene ID" value="TraesCS3A03G0850200"/>
</dbReference>
<dbReference type="Gramene" id="TraesCS3B02G390200.1">
    <property type="protein sequence ID" value="TraesCS3B02G390200.1.cds1"/>
    <property type="gene ID" value="TraesCS3B02G390200"/>
</dbReference>
<dbReference type="Gramene" id="TraesCS3B03G0974400.1">
    <property type="protein sequence ID" value="TraesCS3B03G0974400.1.CDS1"/>
    <property type="gene ID" value="TraesCS3B03G0974400"/>
</dbReference>
<dbReference type="Gramene" id="TraesCS3D02G351300.1">
    <property type="protein sequence ID" value="TraesCS3D02G351300.1.cds1"/>
    <property type="gene ID" value="TraesCS3D02G351300"/>
</dbReference>
<dbReference type="Gramene" id="TraesCS3D02G351400.1">
    <property type="protein sequence ID" value="TraesCS3D02G351400.1.cds1"/>
    <property type="gene ID" value="TraesCS3D02G351400"/>
</dbReference>
<dbReference type="Gramene" id="TraesCS3D03G0778500.1">
    <property type="protein sequence ID" value="TraesCS3D03G0778500.1.CDS1"/>
    <property type="gene ID" value="TraesCS3D03G0778500"/>
</dbReference>
<dbReference type="Gramene" id="TraesCS3D03G0779100.1">
    <property type="protein sequence ID" value="TraesCS3D03G0779100.1.CDS1"/>
    <property type="gene ID" value="TraesCS3D03G0779100"/>
</dbReference>
<dbReference type="Gramene" id="TraesJAG3A03G01470230.1">
    <property type="protein sequence ID" value="TraesJAG3A03G01470230.1.CDS1"/>
    <property type="gene ID" value="TraesJAG3A03G01470230"/>
</dbReference>
<dbReference type="Gramene" id="TraesJAG3B03G01715200.1">
    <property type="protein sequence ID" value="TraesJAG3B03G01715200.1.CDS1"/>
    <property type="gene ID" value="TraesJAG3B03G01715200"/>
</dbReference>
<dbReference type="Gramene" id="TraesJAG3D03G01944160.1">
    <property type="protein sequence ID" value="TraesJAG3D03G01944160.1.CDS1"/>
    <property type="gene ID" value="TraesJAG3D03G01944160"/>
</dbReference>
<dbReference type="Gramene" id="TraesJUL3A03G01473930.1">
    <property type="protein sequence ID" value="TraesJUL3A03G01473930.1.CDS1"/>
    <property type="gene ID" value="TraesJUL3A03G01473930"/>
</dbReference>
<dbReference type="Gramene" id="TraesJUL3B03G01721080.1">
    <property type="protein sequence ID" value="TraesJUL3B03G01721080.1.CDS1"/>
    <property type="gene ID" value="TraesJUL3B03G01721080"/>
</dbReference>
<dbReference type="Gramene" id="TraesJUL3D03G01954010.1">
    <property type="protein sequence ID" value="TraesJUL3D03G01954010.1.CDS1"/>
    <property type="gene ID" value="TraesJUL3D03G01954010"/>
</dbReference>
<dbReference type="Gramene" id="TraesJUL3D03G01954100.1">
    <property type="protein sequence ID" value="TraesJUL3D03G01954100.1.CDS1"/>
    <property type="gene ID" value="TraesJUL3D03G01954100"/>
</dbReference>
<dbReference type="Gramene" id="TraesKAR3A01G0371320.1">
    <property type="protein sequence ID" value="cds.TraesKAR3A01G0371320.1"/>
    <property type="gene ID" value="TraesKAR3A01G0371320"/>
</dbReference>
<dbReference type="Gramene" id="TraesKAR3B01G0408190.1">
    <property type="protein sequence ID" value="cds.TraesKAR3B01G0408190.1"/>
    <property type="gene ID" value="TraesKAR3B01G0408190"/>
</dbReference>
<dbReference type="Gramene" id="TraesKAR3D01G0335600.1">
    <property type="protein sequence ID" value="cds.TraesKAR3D01G0335600.1"/>
    <property type="gene ID" value="TraesKAR3D01G0335600"/>
</dbReference>
<dbReference type="Gramene" id="TraesKAR3D01G0335730.1">
    <property type="protein sequence ID" value="cds.TraesKAR3D01G0335730.1"/>
    <property type="gene ID" value="TraesKAR3D01G0335730"/>
</dbReference>
<dbReference type="Gramene" id="TraesLAC3A03G01405390.1">
    <property type="protein sequence ID" value="TraesLAC3A03G01405390.1.CDS1"/>
    <property type="gene ID" value="TraesLAC3A03G01405390"/>
</dbReference>
<dbReference type="Gramene" id="TraesLAC3B03G01648760.1">
    <property type="protein sequence ID" value="TraesLAC3B03G01648760.1.CDS1"/>
    <property type="gene ID" value="TraesLAC3B03G01648760"/>
</dbReference>
<dbReference type="Gramene" id="TraesLAC3D03G01877820.1">
    <property type="protein sequence ID" value="TraesLAC3D03G01877820.1.CDS1"/>
    <property type="gene ID" value="TraesLAC3D03G01877820"/>
</dbReference>
<dbReference type="Gramene" id="TraesLAC3D03G01877910.1">
    <property type="protein sequence ID" value="TraesLAC3D03G01877910.1.CDS1"/>
    <property type="gene ID" value="TraesLAC3D03G01877910"/>
</dbReference>
<dbReference type="Gramene" id="TraesLDM3A03G01462100.1">
    <property type="protein sequence ID" value="TraesLDM3A03G01462100.1.CDS1"/>
    <property type="gene ID" value="TraesLDM3A03G01462100"/>
</dbReference>
<dbReference type="Gramene" id="TraesLDM3B03G01705710.1">
    <property type="protein sequence ID" value="TraesLDM3B03G01705710.1.CDS1"/>
    <property type="gene ID" value="TraesLDM3B03G01705710"/>
</dbReference>
<dbReference type="Gramene" id="TraesLDM3D03G01942740.1">
    <property type="protein sequence ID" value="TraesLDM3D03G01942740.1.CDS1"/>
    <property type="gene ID" value="TraesLDM3D03G01942740"/>
</dbReference>
<dbReference type="Gramene" id="TraesLDM3D03G01942840.1">
    <property type="protein sequence ID" value="TraesLDM3D03G01942840.1.CDS1"/>
    <property type="gene ID" value="TraesLDM3D03G01942840"/>
</dbReference>
<dbReference type="Gramene" id="TraesMAC3B03G01707980.1">
    <property type="protein sequence ID" value="TraesMAC3B03G01707980.1.CDS1"/>
    <property type="gene ID" value="TraesMAC3B03G01707980"/>
</dbReference>
<dbReference type="Gramene" id="TraesMAC3D03G01934860.1">
    <property type="protein sequence ID" value="TraesMAC3D03G01934860.1.CDS1"/>
    <property type="gene ID" value="TraesMAC3D03G01934860"/>
</dbReference>
<dbReference type="Gramene" id="TraesMAC3D03G01934960.1">
    <property type="protein sequence ID" value="TraesMAC3D03G01934960.1.CDS1"/>
    <property type="gene ID" value="TraesMAC3D03G01934960"/>
</dbReference>
<dbReference type="Gramene" id="TraesNOR3A03G01482280.1">
    <property type="protein sequence ID" value="TraesNOR3A03G01482280.1.CDS1"/>
    <property type="gene ID" value="TraesNOR3A03G01482280"/>
</dbReference>
<dbReference type="Gramene" id="TraesNOR3D03G01962560.1">
    <property type="protein sequence ID" value="TraesNOR3D03G01962560.1.CDS1"/>
    <property type="gene ID" value="TraesNOR3D03G01962560"/>
</dbReference>
<dbReference type="Gramene" id="TraesNOR3D03G01962660.1">
    <property type="protein sequence ID" value="TraesNOR3D03G01962660.1.CDS1"/>
    <property type="gene ID" value="TraesNOR3D03G01962660"/>
</dbReference>
<dbReference type="Gramene" id="TraesPARA_EIv1.0_0852200.1">
    <property type="protein sequence ID" value="TraesPARA_EIv1.0_0852200.1.CDS1"/>
    <property type="gene ID" value="TraesPARA_EIv1.0_0852200"/>
</dbReference>
<dbReference type="Gramene" id="TraesPARA_EIv1.0_0952570.1">
    <property type="protein sequence ID" value="TraesPARA_EIv1.0_0952570.1.CDS1"/>
    <property type="gene ID" value="TraesPARA_EIv1.0_0952570"/>
</dbReference>
<dbReference type="Gramene" id="TraesPARA_EIv1.0_1135650.1">
    <property type="protein sequence ID" value="TraesPARA_EIv1.0_1135650.1.CDS1"/>
    <property type="gene ID" value="TraesPARA_EIv1.0_1135650"/>
</dbReference>
<dbReference type="Gramene" id="TraesPARA_EIv1.0_1135680.1">
    <property type="protein sequence ID" value="TraesPARA_EIv1.0_1135680.1.CDS1"/>
    <property type="gene ID" value="TraesPARA_EIv1.0_1135680"/>
</dbReference>
<dbReference type="Gramene" id="TraesRN3B0100975500.1">
    <property type="protein sequence ID" value="TraesRN3B0100975500.1"/>
    <property type="gene ID" value="TraesRN3B0100975500"/>
</dbReference>
<dbReference type="Gramene" id="TraesRN3D0100812500.1">
    <property type="protein sequence ID" value="TraesRN3D0100812500.1"/>
    <property type="gene ID" value="TraesRN3D0100812500"/>
</dbReference>
<dbReference type="Gramene" id="TraesRN3D0100813100.1">
    <property type="protein sequence ID" value="TraesRN3D0100813100.1"/>
    <property type="gene ID" value="TraesRN3D0100813100"/>
</dbReference>
<dbReference type="Gramene" id="TraesROB_scaffold_009430_01G000100.1">
    <property type="protein sequence ID" value="TraesROB_scaffold_009430_01G000100.1"/>
    <property type="gene ID" value="TraesROB_scaffold_009430_01G000100"/>
</dbReference>
<dbReference type="Gramene" id="TraesROB_scaffold_039272_01G000100.1">
    <property type="protein sequence ID" value="TraesROB_scaffold_039272_01G000100.1"/>
    <property type="gene ID" value="TraesROB_scaffold_039272_01G000100"/>
</dbReference>
<dbReference type="Gramene" id="TraesROB_scaffold_072729_01G000100.1">
    <property type="protein sequence ID" value="TraesROB_scaffold_072729_01G000100.1"/>
    <property type="gene ID" value="TraesROB_scaffold_072729_01G000100"/>
</dbReference>
<dbReference type="Gramene" id="TraesSTA3A03G01453030.1">
    <property type="protein sequence ID" value="TraesSTA3A03G01453030.1.CDS1"/>
    <property type="gene ID" value="TraesSTA3A03G01453030"/>
</dbReference>
<dbReference type="Gramene" id="TraesSTA3B03G01696450.1">
    <property type="protein sequence ID" value="TraesSTA3B03G01696450.1.CDS1"/>
    <property type="gene ID" value="TraesSTA3B03G01696450"/>
</dbReference>
<dbReference type="Gramene" id="TraesSTA3D03G01939450.1">
    <property type="protein sequence ID" value="TraesSTA3D03G01939450.1.CDS1"/>
    <property type="gene ID" value="TraesSTA3D03G01939450"/>
</dbReference>
<dbReference type="Gramene" id="TraesSTA3D03G01939560.1">
    <property type="protein sequence ID" value="TraesSTA3D03G01939560.1.CDS1"/>
    <property type="gene ID" value="TraesSTA3D03G01939560"/>
</dbReference>
<dbReference type="Gramene" id="TraesSYM3B03G01728800.1">
    <property type="protein sequence ID" value="TraesSYM3B03G01728800.1.CDS1"/>
    <property type="gene ID" value="TraesSYM3B03G01728800"/>
</dbReference>
<dbReference type="Gramene" id="TraesSYM3D03G01960180.1">
    <property type="protein sequence ID" value="TraesSYM3D03G01960180.1.CDS1"/>
    <property type="gene ID" value="TraesSYM3D03G01960180"/>
</dbReference>
<dbReference type="Gramene" id="TraesSYM3D03G01960280.1">
    <property type="protein sequence ID" value="TraesSYM3D03G01960280.1.CDS1"/>
    <property type="gene ID" value="TraesSYM3D03G01960280"/>
</dbReference>
<dbReference type="Gramene" id="TraesWEE_scaffold_084326_01G000100.1">
    <property type="protein sequence ID" value="TraesWEE_scaffold_084326_01G000100.1"/>
    <property type="gene ID" value="TraesWEE_scaffold_084326_01G000100"/>
</dbReference>
<dbReference type="Gramene" id="TraesWEE_scaffold_104702_01G000100.1">
    <property type="protein sequence ID" value="TraesWEE_scaffold_104702_01G000100.1"/>
    <property type="gene ID" value="TraesWEE_scaffold_104702_01G000100"/>
</dbReference>
<dbReference type="Gramene" id="TraesWEE_scaffold_128839_01G000100.1">
    <property type="protein sequence ID" value="TraesWEE_scaffold_128839_01G000100.1"/>
    <property type="gene ID" value="TraesWEE_scaffold_128839_01G000100"/>
</dbReference>
<dbReference type="eggNOG" id="KOG1744">
    <property type="taxonomic scope" value="Eukaryota"/>
</dbReference>
<dbReference type="HOGENOM" id="CLU_075666_1_0_1"/>
<dbReference type="OMA" id="FDNIPEQ"/>
<dbReference type="OrthoDB" id="1914959at2759"/>
<dbReference type="Proteomes" id="UP000019116">
    <property type="component" value="Chromosome 3A"/>
</dbReference>
<dbReference type="Proteomes" id="UP000019116">
    <property type="component" value="Chromosome 3B"/>
</dbReference>
<dbReference type="Proteomes" id="UP000019116">
    <property type="component" value="Chromosome 3D"/>
</dbReference>
<dbReference type="ExpressionAtlas" id="Q43216">
    <property type="expression patterns" value="baseline and differential"/>
</dbReference>
<dbReference type="GO" id="GO:0000786">
    <property type="term" value="C:nucleosome"/>
    <property type="evidence" value="ECO:0007669"/>
    <property type="project" value="UniProtKB-KW"/>
</dbReference>
<dbReference type="GO" id="GO:0005634">
    <property type="term" value="C:nucleus"/>
    <property type="evidence" value="ECO:0007669"/>
    <property type="project" value="UniProtKB-SubCell"/>
</dbReference>
<dbReference type="GO" id="GO:0003677">
    <property type="term" value="F:DNA binding"/>
    <property type="evidence" value="ECO:0000318"/>
    <property type="project" value="GO_Central"/>
</dbReference>
<dbReference type="GO" id="GO:0046982">
    <property type="term" value="F:protein heterodimerization activity"/>
    <property type="evidence" value="ECO:0007669"/>
    <property type="project" value="InterPro"/>
</dbReference>
<dbReference type="GO" id="GO:0030527">
    <property type="term" value="F:structural constituent of chromatin"/>
    <property type="evidence" value="ECO:0007669"/>
    <property type="project" value="InterPro"/>
</dbReference>
<dbReference type="CDD" id="cd22910">
    <property type="entry name" value="HFD_H2B"/>
    <property type="match status" value="1"/>
</dbReference>
<dbReference type="FunFam" id="1.10.20.10:FF:000014">
    <property type="entry name" value="Histone H2B"/>
    <property type="match status" value="1"/>
</dbReference>
<dbReference type="Gene3D" id="1.10.20.10">
    <property type="entry name" value="Histone, subunit A"/>
    <property type="match status" value="1"/>
</dbReference>
<dbReference type="InterPro" id="IPR009072">
    <property type="entry name" value="Histone-fold"/>
</dbReference>
<dbReference type="InterPro" id="IPR007125">
    <property type="entry name" value="Histone_H2A/H2B/H3"/>
</dbReference>
<dbReference type="InterPro" id="IPR000558">
    <property type="entry name" value="Histone_H2B"/>
</dbReference>
<dbReference type="InterPro" id="IPR055333">
    <property type="entry name" value="HISTONE_H2B_site"/>
</dbReference>
<dbReference type="PANTHER" id="PTHR23428">
    <property type="entry name" value="HISTONE H2B"/>
    <property type="match status" value="1"/>
</dbReference>
<dbReference type="Pfam" id="PF00125">
    <property type="entry name" value="Histone"/>
    <property type="match status" value="1"/>
</dbReference>
<dbReference type="PRINTS" id="PR00621">
    <property type="entry name" value="HISTONEH2B"/>
</dbReference>
<dbReference type="SMART" id="SM00427">
    <property type="entry name" value="H2B"/>
    <property type="match status" value="1"/>
</dbReference>
<dbReference type="SUPFAM" id="SSF47113">
    <property type="entry name" value="Histone-fold"/>
    <property type="match status" value="1"/>
</dbReference>
<dbReference type="PROSITE" id="PS00357">
    <property type="entry name" value="HISTONE_H2B"/>
    <property type="match status" value="1"/>
</dbReference>
<comment type="function">
    <text>Core component of nucleosome. Nucleosomes wrap and compact DNA into chromatin, limiting DNA accessibility to the cellular machineries which require DNA as a template. Histones thereby play a central role in transcription regulation, DNA repair, DNA replication and chromosomal stability. DNA accessibility is regulated via a complex set of post-translational modifications of histones, also called histone code, and nucleosome remodeling.</text>
</comment>
<comment type="subunit">
    <text>The nucleosome is a histone octamer containing two molecules each of H2A, H2B, H3 and H4 assembled in one H3-H4 heterotetramer and two H2A-H2B heterodimers. The octamer wraps approximately 147 bp of DNA.</text>
</comment>
<comment type="subcellular location">
    <subcellularLocation>
        <location evidence="1">Nucleus</location>
    </subcellularLocation>
    <subcellularLocation>
        <location evidence="1">Chromosome</location>
    </subcellularLocation>
</comment>
<comment type="PTM">
    <text evidence="1">Can be acetylated to form H2BK6ac and H2BK33ac.</text>
</comment>
<comment type="PTM">
    <text evidence="1">Monoubiquitinated to form H2BK143ub1; may give a specific tag for epigenetic transcriptional activation.</text>
</comment>
<comment type="miscellaneous">
    <text>Phosphorylation of H2B was not detected.</text>
</comment>
<comment type="similarity">
    <text evidence="3">Belongs to the histone H2B family.</text>
</comment>
<comment type="caution">
    <text evidence="3">To ensure consistency between histone entries, we follow the 'Brno' nomenclature for histone modifications, with positions referring to those used in the literature for the 'closest' model organism. Due to slight variations in histone sequences between organisms and to the presence of initiator methionine in UniProtKB/Swiss-Prot sequences, the actual positions of modified amino acids in the sequence generally differ. In this entry the following conventions are used: H2BK6ac = acetylated Lys-7; H2BK33ac = acetylated Lys-26; H2BK143ub1 = monoubiquitinated Lys-132.</text>
</comment>
<proteinExistence type="evidence at protein level"/>
<feature type="initiator methionine" description="Removed" evidence="1">
    <location>
        <position position="1"/>
    </location>
</feature>
<feature type="chain" id="PRO_0000239425" description="Histone H2B.5">
    <location>
        <begin position="2"/>
        <end position="136"/>
    </location>
</feature>
<feature type="region of interest" description="Disordered" evidence="2">
    <location>
        <begin position="1"/>
        <end position="44"/>
    </location>
</feature>
<feature type="compositionally biased region" description="Basic and acidic residues" evidence="2">
    <location>
        <begin position="1"/>
        <end position="36"/>
    </location>
</feature>
<feature type="modified residue" description="N6-acetyllysine" evidence="1">
    <location>
        <position position="7"/>
    </location>
</feature>
<feature type="modified residue" description="N6-acetyllysine" evidence="1">
    <location>
        <position position="26"/>
    </location>
</feature>
<feature type="cross-link" description="Glycyl lysine isopeptide (Lys-Gly) (interchain with G-Cter in ubiquitin)" evidence="1">
    <location>
        <position position="132"/>
    </location>
</feature>
<keyword id="KW-0007">Acetylation</keyword>
<keyword id="KW-0158">Chromosome</keyword>
<keyword id="KW-0238">DNA-binding</keyword>
<keyword id="KW-1017">Isopeptide bond</keyword>
<keyword id="KW-0544">Nucleosome core</keyword>
<keyword id="KW-0539">Nucleus</keyword>
<keyword id="KW-1185">Reference proteome</keyword>
<keyword id="KW-0832">Ubl conjugation</keyword>
<sequence>MAPKAEKKPAAEKKPVETEKKPKAEKRVPGKDGGADKKKKKAKKSVETYKIYIFKVLKQVHPDIGISSKAMSIMNSFINDIFEKLAGESAKLARYNKKPTITSREIQTAVRLVLPGELAKHAVSEGTKAVTKFTSS</sequence>
<protein>
    <recommendedName>
        <fullName>Histone H2B.5</fullName>
    </recommendedName>
    <alternativeName>
        <fullName>wcH2B-6</fullName>
    </alternativeName>
</protein>
<reference key="1">
    <citation type="journal article" date="1995" name="Plant Mol. Biol.">
        <title>Structural and functional characterization of two wheat histone H2B promoters.</title>
        <authorList>
            <person name="Yang P."/>
            <person name="Taoka K."/>
            <person name="Nakayma T."/>
            <person name="Iwabuchi M."/>
        </authorList>
    </citation>
    <scope>NUCLEOTIDE SEQUENCE [MRNA]</scope>
</reference>
<reference key="2">
    <citation type="journal article" date="1990" name="Plant Physiol.">
        <title>Phosphorylation of plant H2A histones.</title>
        <authorList>
            <person name="Green G.R."/>
            <person name="Gustavsen L.C."/>
            <person name="Poccia D.L."/>
        </authorList>
    </citation>
    <scope>LACK OF PHOSPHORYLATION</scope>
</reference>
<evidence type="ECO:0000250" key="1"/>
<evidence type="ECO:0000256" key="2">
    <source>
        <dbReference type="SAM" id="MobiDB-lite"/>
    </source>
</evidence>
<evidence type="ECO:0000305" key="3"/>
<name>H2B5_WHEAT</name>
<accession>Q43216</accession>